<reference key="1">
    <citation type="submission" date="2006-08" db="EMBL/GenBank/DDBJ databases">
        <title>Complete sequence of Shewanella frigidimarina NCIMB 400.</title>
        <authorList>
            <consortium name="US DOE Joint Genome Institute"/>
            <person name="Copeland A."/>
            <person name="Lucas S."/>
            <person name="Lapidus A."/>
            <person name="Barry K."/>
            <person name="Detter J.C."/>
            <person name="Glavina del Rio T."/>
            <person name="Hammon N."/>
            <person name="Israni S."/>
            <person name="Dalin E."/>
            <person name="Tice H."/>
            <person name="Pitluck S."/>
            <person name="Fredrickson J.K."/>
            <person name="Kolker E."/>
            <person name="McCuel L.A."/>
            <person name="DiChristina T."/>
            <person name="Nealson K.H."/>
            <person name="Newman D."/>
            <person name="Tiedje J.M."/>
            <person name="Zhou J."/>
            <person name="Romine M.F."/>
            <person name="Culley D.E."/>
            <person name="Serres M."/>
            <person name="Chertkov O."/>
            <person name="Brettin T."/>
            <person name="Bruce D."/>
            <person name="Han C."/>
            <person name="Tapia R."/>
            <person name="Gilna P."/>
            <person name="Schmutz J."/>
            <person name="Larimer F."/>
            <person name="Land M."/>
            <person name="Hauser L."/>
            <person name="Kyrpides N."/>
            <person name="Mikhailova N."/>
            <person name="Richardson P."/>
        </authorList>
    </citation>
    <scope>NUCLEOTIDE SEQUENCE [LARGE SCALE GENOMIC DNA]</scope>
    <source>
        <strain>NCIMB 400</strain>
    </source>
</reference>
<evidence type="ECO:0000255" key="1">
    <source>
        <dbReference type="HAMAP-Rule" id="MF_00017"/>
    </source>
</evidence>
<accession>Q084C7</accession>
<keyword id="KW-0227">DNA damage</keyword>
<keyword id="KW-0233">DNA recombination</keyword>
<keyword id="KW-0234">DNA repair</keyword>
<keyword id="KW-0479">Metal-binding</keyword>
<keyword id="KW-1185">Reference proteome</keyword>
<keyword id="KW-0862">Zinc</keyword>
<keyword id="KW-0863">Zinc-finger</keyword>
<dbReference type="EMBL" id="CP000447">
    <property type="protein sequence ID" value="ABI71388.1"/>
    <property type="molecule type" value="Genomic_DNA"/>
</dbReference>
<dbReference type="RefSeq" id="WP_011637008.1">
    <property type="nucleotide sequence ID" value="NC_008345.1"/>
</dbReference>
<dbReference type="SMR" id="Q084C7"/>
<dbReference type="STRING" id="318167.Sfri_1537"/>
<dbReference type="KEGG" id="sfr:Sfri_1537"/>
<dbReference type="eggNOG" id="COG0353">
    <property type="taxonomic scope" value="Bacteria"/>
</dbReference>
<dbReference type="HOGENOM" id="CLU_060739_1_2_6"/>
<dbReference type="OrthoDB" id="9802672at2"/>
<dbReference type="Proteomes" id="UP000000684">
    <property type="component" value="Chromosome"/>
</dbReference>
<dbReference type="GO" id="GO:0003677">
    <property type="term" value="F:DNA binding"/>
    <property type="evidence" value="ECO:0007669"/>
    <property type="project" value="UniProtKB-UniRule"/>
</dbReference>
<dbReference type="GO" id="GO:0008270">
    <property type="term" value="F:zinc ion binding"/>
    <property type="evidence" value="ECO:0007669"/>
    <property type="project" value="UniProtKB-KW"/>
</dbReference>
<dbReference type="GO" id="GO:0006310">
    <property type="term" value="P:DNA recombination"/>
    <property type="evidence" value="ECO:0007669"/>
    <property type="project" value="UniProtKB-UniRule"/>
</dbReference>
<dbReference type="GO" id="GO:0006281">
    <property type="term" value="P:DNA repair"/>
    <property type="evidence" value="ECO:0007669"/>
    <property type="project" value="UniProtKB-UniRule"/>
</dbReference>
<dbReference type="CDD" id="cd01025">
    <property type="entry name" value="TOPRIM_recR"/>
    <property type="match status" value="1"/>
</dbReference>
<dbReference type="FunFam" id="3.40.1360.10:FF:000001">
    <property type="entry name" value="Recombination protein RecR"/>
    <property type="match status" value="1"/>
</dbReference>
<dbReference type="Gene3D" id="3.40.1360.10">
    <property type="match status" value="1"/>
</dbReference>
<dbReference type="Gene3D" id="6.10.250.240">
    <property type="match status" value="1"/>
</dbReference>
<dbReference type="Gene3D" id="1.10.8.420">
    <property type="entry name" value="RecR Domain 1"/>
    <property type="match status" value="1"/>
</dbReference>
<dbReference type="HAMAP" id="MF_00017">
    <property type="entry name" value="RecR"/>
    <property type="match status" value="1"/>
</dbReference>
<dbReference type="InterPro" id="IPR000093">
    <property type="entry name" value="DNA_Rcmb_RecR"/>
</dbReference>
<dbReference type="InterPro" id="IPR023627">
    <property type="entry name" value="Rcmb_RecR"/>
</dbReference>
<dbReference type="InterPro" id="IPR015967">
    <property type="entry name" value="Rcmb_RecR_Znf"/>
</dbReference>
<dbReference type="InterPro" id="IPR006171">
    <property type="entry name" value="TOPRIM_dom"/>
</dbReference>
<dbReference type="InterPro" id="IPR034137">
    <property type="entry name" value="TOPRIM_RecR"/>
</dbReference>
<dbReference type="NCBIfam" id="TIGR00615">
    <property type="entry name" value="recR"/>
    <property type="match status" value="1"/>
</dbReference>
<dbReference type="PANTHER" id="PTHR30446">
    <property type="entry name" value="RECOMBINATION PROTEIN RECR"/>
    <property type="match status" value="1"/>
</dbReference>
<dbReference type="PANTHER" id="PTHR30446:SF0">
    <property type="entry name" value="RECOMBINATION PROTEIN RECR"/>
    <property type="match status" value="1"/>
</dbReference>
<dbReference type="Pfam" id="PF21175">
    <property type="entry name" value="RecR_C"/>
    <property type="match status" value="1"/>
</dbReference>
<dbReference type="Pfam" id="PF21176">
    <property type="entry name" value="RecR_HhH"/>
    <property type="match status" value="1"/>
</dbReference>
<dbReference type="Pfam" id="PF02132">
    <property type="entry name" value="RecR_ZnF"/>
    <property type="match status" value="1"/>
</dbReference>
<dbReference type="Pfam" id="PF13662">
    <property type="entry name" value="Toprim_4"/>
    <property type="match status" value="1"/>
</dbReference>
<dbReference type="SMART" id="SM00493">
    <property type="entry name" value="TOPRIM"/>
    <property type="match status" value="1"/>
</dbReference>
<dbReference type="SUPFAM" id="SSF111304">
    <property type="entry name" value="Recombination protein RecR"/>
    <property type="match status" value="1"/>
</dbReference>
<dbReference type="PROSITE" id="PS50880">
    <property type="entry name" value="TOPRIM"/>
    <property type="match status" value="1"/>
</dbReference>
<comment type="function">
    <text evidence="1">May play a role in DNA repair. It seems to be involved in an RecBC-independent recombinational process of DNA repair. It may act with RecF and RecO.</text>
</comment>
<comment type="similarity">
    <text evidence="1">Belongs to the RecR family.</text>
</comment>
<sequence length="199" mass="21576">MKFSPLVDELIQSLRALPGVGPKSAQRMAFQLLERERKVGLKLADSLQKAMSEVGHCQSCRTFTEQDLCPICSSHRRINTGIICVVETPADVLAIEAGGHFNGRYFVLLGHLSPLDGVGPEELGLALLERHLTSNEVSELILATNPTVEGDATAHFIADMARRHNVVISRIAHGVPVGGELEYVDSTTLALSFNGRIPL</sequence>
<feature type="chain" id="PRO_1000001604" description="Recombination protein RecR">
    <location>
        <begin position="1"/>
        <end position="199"/>
    </location>
</feature>
<feature type="domain" description="Toprim" evidence="1">
    <location>
        <begin position="81"/>
        <end position="176"/>
    </location>
</feature>
<feature type="zinc finger region" description="C4-type" evidence="1">
    <location>
        <begin position="57"/>
        <end position="72"/>
    </location>
</feature>
<organism>
    <name type="scientific">Shewanella frigidimarina (strain NCIMB 400)</name>
    <dbReference type="NCBI Taxonomy" id="318167"/>
    <lineage>
        <taxon>Bacteria</taxon>
        <taxon>Pseudomonadati</taxon>
        <taxon>Pseudomonadota</taxon>
        <taxon>Gammaproteobacteria</taxon>
        <taxon>Alteromonadales</taxon>
        <taxon>Shewanellaceae</taxon>
        <taxon>Shewanella</taxon>
    </lineage>
</organism>
<protein>
    <recommendedName>
        <fullName evidence="1">Recombination protein RecR</fullName>
    </recommendedName>
</protein>
<name>RECR_SHEFN</name>
<proteinExistence type="inferred from homology"/>
<gene>
    <name evidence="1" type="primary">recR</name>
    <name type="ordered locus">Sfri_1537</name>
</gene>